<name>VGB_NOCFA</name>
<comment type="function">
    <text evidence="1">Inactivates the type B streptogramin antibiotics by linearizing the lactone ring at the ester linkage, generating a free phenylglycine carboxylate and converting the threonyl moiety into 2-amino-butenoic acid.</text>
</comment>
<comment type="cofactor">
    <cofactor evidence="1">
        <name>Mg(2+)</name>
        <dbReference type="ChEBI" id="CHEBI:18420"/>
    </cofactor>
</comment>
<comment type="subunit">
    <text evidence="1">Monomer.</text>
</comment>
<comment type="similarity">
    <text evidence="1">Belongs to the Vgb family.</text>
</comment>
<gene>
    <name evidence="1" type="primary">vgb</name>
    <name type="ordered locus">NFA_24930</name>
</gene>
<dbReference type="EC" id="4.2.99.-" evidence="1"/>
<dbReference type="EMBL" id="AP006618">
    <property type="protein sequence ID" value="BAD57340.1"/>
    <property type="molecule type" value="Genomic_DNA"/>
</dbReference>
<dbReference type="RefSeq" id="WP_011209025.1">
    <property type="nucleotide sequence ID" value="NC_006361.1"/>
</dbReference>
<dbReference type="SMR" id="Q5YWV1"/>
<dbReference type="STRING" id="247156.NFA_24930"/>
<dbReference type="GeneID" id="61133241"/>
<dbReference type="KEGG" id="nfa:NFA_24930"/>
<dbReference type="eggNOG" id="COG4257">
    <property type="taxonomic scope" value="Bacteria"/>
</dbReference>
<dbReference type="HOGENOM" id="CLU_054751_1_0_11"/>
<dbReference type="OrthoDB" id="9812926at2"/>
<dbReference type="Proteomes" id="UP000006820">
    <property type="component" value="Chromosome"/>
</dbReference>
<dbReference type="GO" id="GO:0016835">
    <property type="term" value="F:carbon-oxygen lyase activity"/>
    <property type="evidence" value="ECO:0007669"/>
    <property type="project" value="UniProtKB-UniRule"/>
</dbReference>
<dbReference type="GO" id="GO:0000287">
    <property type="term" value="F:magnesium ion binding"/>
    <property type="evidence" value="ECO:0007669"/>
    <property type="project" value="InterPro"/>
</dbReference>
<dbReference type="GO" id="GO:0017001">
    <property type="term" value="P:antibiotic catabolic process"/>
    <property type="evidence" value="ECO:0007669"/>
    <property type="project" value="UniProtKB-UniRule"/>
</dbReference>
<dbReference type="GO" id="GO:0046677">
    <property type="term" value="P:response to antibiotic"/>
    <property type="evidence" value="ECO:0007669"/>
    <property type="project" value="UniProtKB-KW"/>
</dbReference>
<dbReference type="Gene3D" id="2.130.10.10">
    <property type="entry name" value="YVTN repeat-like/Quinoprotein amine dehydrogenase"/>
    <property type="match status" value="2"/>
</dbReference>
<dbReference type="HAMAP" id="MF_01282">
    <property type="entry name" value="VirginiamycinB_lyase"/>
    <property type="match status" value="1"/>
</dbReference>
<dbReference type="InterPro" id="IPR011217">
    <property type="entry name" value="Streptogrm_lyase"/>
</dbReference>
<dbReference type="InterPro" id="IPR051344">
    <property type="entry name" value="Vgb"/>
</dbReference>
<dbReference type="InterPro" id="IPR015943">
    <property type="entry name" value="WD40/YVTN_repeat-like_dom_sf"/>
</dbReference>
<dbReference type="PANTHER" id="PTHR40274">
    <property type="entry name" value="VIRGINIAMYCIN B LYASE"/>
    <property type="match status" value="1"/>
</dbReference>
<dbReference type="PANTHER" id="PTHR40274:SF3">
    <property type="entry name" value="VIRGINIAMYCIN B LYASE"/>
    <property type="match status" value="1"/>
</dbReference>
<dbReference type="Pfam" id="PF24684">
    <property type="entry name" value="Vgb_lyase"/>
    <property type="match status" value="1"/>
</dbReference>
<dbReference type="SUPFAM" id="SSF63829">
    <property type="entry name" value="Calcium-dependent phosphotriesterase"/>
    <property type="match status" value="1"/>
</dbReference>
<proteinExistence type="inferred from homology"/>
<feature type="chain" id="PRO_0000313776" description="Virginiamycin B lyase">
    <location>
        <begin position="1"/>
        <end position="279"/>
    </location>
</feature>
<feature type="active site" description="Proton acceptor" evidence="1">
    <location>
        <position position="255"/>
    </location>
</feature>
<feature type="binding site" evidence="1">
    <location>
        <position position="215"/>
    </location>
    <ligand>
        <name>substrate</name>
    </ligand>
</feature>
<feature type="binding site" evidence="1">
    <location>
        <position position="253"/>
    </location>
    <ligand>
        <name>Mg(2+)</name>
        <dbReference type="ChEBI" id="CHEBI:18420"/>
    </ligand>
</feature>
<feature type="binding site" evidence="1">
    <location>
        <position position="270"/>
    </location>
    <ligand>
        <name>Mg(2+)</name>
        <dbReference type="ChEBI" id="CHEBI:18420"/>
    </ligand>
</feature>
<protein>
    <recommendedName>
        <fullName evidence="1">Virginiamycin B lyase</fullName>
        <ecNumber evidence="1">4.2.99.-</ecNumber>
    </recommendedName>
    <alternativeName>
        <fullName evidence="1">Streptogramin B lyase</fullName>
    </alternativeName>
</protein>
<keyword id="KW-0046">Antibiotic resistance</keyword>
<keyword id="KW-0456">Lyase</keyword>
<keyword id="KW-0460">Magnesium</keyword>
<keyword id="KW-0479">Metal-binding</keyword>
<keyword id="KW-1185">Reference proteome</keyword>
<sequence>MPEILEVVDVDGGPYGVTVDETGTLWFTLAARGAVGRLVDGTVETVALEPADGSPTVIMAEGDGAWFTEFRGNRIGRVEANGALSFLTAESPYGLCRAGDGGLWYTELSAGGVVHRAPDGTTTRHAVEGMPSMIAEAADGTVFVTLNQGNAVARITPDGQVRTTALPTAGAGPVGLATAADGAWFVELLAGQLGHVDRDGTVTEHPLPDRDARPHAVVVAPDGTVWFTEWAAARLGRRTADGEITELALPGAEPHGLAVAPDGTLWVAMESGALVHVRP</sequence>
<organism>
    <name type="scientific">Nocardia farcinica (strain IFM 10152)</name>
    <dbReference type="NCBI Taxonomy" id="247156"/>
    <lineage>
        <taxon>Bacteria</taxon>
        <taxon>Bacillati</taxon>
        <taxon>Actinomycetota</taxon>
        <taxon>Actinomycetes</taxon>
        <taxon>Mycobacteriales</taxon>
        <taxon>Nocardiaceae</taxon>
        <taxon>Nocardia</taxon>
    </lineage>
</organism>
<evidence type="ECO:0000255" key="1">
    <source>
        <dbReference type="HAMAP-Rule" id="MF_01282"/>
    </source>
</evidence>
<accession>Q5YWV1</accession>
<reference key="1">
    <citation type="journal article" date="2004" name="Proc. Natl. Acad. Sci. U.S.A.">
        <title>The complete genomic sequence of Nocardia farcinica IFM 10152.</title>
        <authorList>
            <person name="Ishikawa J."/>
            <person name="Yamashita A."/>
            <person name="Mikami Y."/>
            <person name="Hoshino Y."/>
            <person name="Kurita H."/>
            <person name="Hotta K."/>
            <person name="Shiba T."/>
            <person name="Hattori M."/>
        </authorList>
    </citation>
    <scope>NUCLEOTIDE SEQUENCE [LARGE SCALE GENOMIC DNA]</scope>
    <source>
        <strain>IFM 10152</strain>
    </source>
</reference>